<comment type="function">
    <text evidence="1">Could be a nuclease involved in processing of the 5'-end of pre-16S rRNA.</text>
</comment>
<comment type="subcellular location">
    <subcellularLocation>
        <location evidence="1">Cytoplasm</location>
    </subcellularLocation>
</comment>
<comment type="similarity">
    <text evidence="1">Belongs to the YqgF nuclease family.</text>
</comment>
<organism>
    <name type="scientific">Xylella fastidiosa (strain M12)</name>
    <dbReference type="NCBI Taxonomy" id="405440"/>
    <lineage>
        <taxon>Bacteria</taxon>
        <taxon>Pseudomonadati</taxon>
        <taxon>Pseudomonadota</taxon>
        <taxon>Gammaproteobacteria</taxon>
        <taxon>Lysobacterales</taxon>
        <taxon>Lysobacteraceae</taxon>
        <taxon>Xylella</taxon>
    </lineage>
</organism>
<keyword id="KW-0963">Cytoplasm</keyword>
<keyword id="KW-0378">Hydrolase</keyword>
<keyword id="KW-0540">Nuclease</keyword>
<keyword id="KW-0690">Ribosome biogenesis</keyword>
<accession>B0U3C1</accession>
<proteinExistence type="inferred from homology"/>
<sequence length="155" mass="16663">MPEASSPFPDGIVLGFDVGTRRIGVAVGSAWGAGARAVAVIDVHGVAVDWNALDRVKRNWLPVGLVVGDPLTLEGHDQPIRKQAHAFACQLRERYRLPVVLVDERSSSVEAASRFAGARAAGYKRRRDADTLDAIAAAVILERWLADPMQATSLP</sequence>
<dbReference type="EC" id="3.1.-.-" evidence="1"/>
<dbReference type="EMBL" id="CP000941">
    <property type="protein sequence ID" value="ACA12350.1"/>
    <property type="molecule type" value="Genomic_DNA"/>
</dbReference>
<dbReference type="SMR" id="B0U3C1"/>
<dbReference type="KEGG" id="xfm:Xfasm12_1427"/>
<dbReference type="HOGENOM" id="CLU_098240_3_2_6"/>
<dbReference type="GO" id="GO:0005829">
    <property type="term" value="C:cytosol"/>
    <property type="evidence" value="ECO:0007669"/>
    <property type="project" value="TreeGrafter"/>
</dbReference>
<dbReference type="GO" id="GO:0004518">
    <property type="term" value="F:nuclease activity"/>
    <property type="evidence" value="ECO:0007669"/>
    <property type="project" value="UniProtKB-KW"/>
</dbReference>
<dbReference type="GO" id="GO:0000967">
    <property type="term" value="P:rRNA 5'-end processing"/>
    <property type="evidence" value="ECO:0007669"/>
    <property type="project" value="UniProtKB-UniRule"/>
</dbReference>
<dbReference type="CDD" id="cd16964">
    <property type="entry name" value="YqgF"/>
    <property type="match status" value="1"/>
</dbReference>
<dbReference type="Gene3D" id="3.30.420.140">
    <property type="entry name" value="YqgF/RNase H-like domain"/>
    <property type="match status" value="1"/>
</dbReference>
<dbReference type="HAMAP" id="MF_00651">
    <property type="entry name" value="Nuclease_YqgF"/>
    <property type="match status" value="1"/>
</dbReference>
<dbReference type="InterPro" id="IPR012337">
    <property type="entry name" value="RNaseH-like_sf"/>
</dbReference>
<dbReference type="InterPro" id="IPR005227">
    <property type="entry name" value="YqgF"/>
</dbReference>
<dbReference type="InterPro" id="IPR006641">
    <property type="entry name" value="YqgF/RNaseH-like_dom"/>
</dbReference>
<dbReference type="InterPro" id="IPR037027">
    <property type="entry name" value="YqgF/RNaseH-like_dom_sf"/>
</dbReference>
<dbReference type="NCBIfam" id="TIGR00250">
    <property type="entry name" value="RNAse_H_YqgF"/>
    <property type="match status" value="1"/>
</dbReference>
<dbReference type="PANTHER" id="PTHR33317">
    <property type="entry name" value="POLYNUCLEOTIDYL TRANSFERASE, RIBONUCLEASE H-LIKE SUPERFAMILY PROTEIN"/>
    <property type="match status" value="1"/>
</dbReference>
<dbReference type="PANTHER" id="PTHR33317:SF4">
    <property type="entry name" value="POLYNUCLEOTIDYL TRANSFERASE, RIBONUCLEASE H-LIKE SUPERFAMILY PROTEIN"/>
    <property type="match status" value="1"/>
</dbReference>
<dbReference type="Pfam" id="PF03652">
    <property type="entry name" value="RuvX"/>
    <property type="match status" value="1"/>
</dbReference>
<dbReference type="SMART" id="SM00732">
    <property type="entry name" value="YqgFc"/>
    <property type="match status" value="1"/>
</dbReference>
<dbReference type="SUPFAM" id="SSF53098">
    <property type="entry name" value="Ribonuclease H-like"/>
    <property type="match status" value="1"/>
</dbReference>
<reference key="1">
    <citation type="journal article" date="2010" name="J. Bacteriol.">
        <title>Whole genome sequences of two Xylella fastidiosa strains (M12 and M23) causing almond leaf scorch disease in California.</title>
        <authorList>
            <person name="Chen J."/>
            <person name="Xie G."/>
            <person name="Han S."/>
            <person name="Chertkov O."/>
            <person name="Sims D."/>
            <person name="Civerolo E.L."/>
        </authorList>
    </citation>
    <scope>NUCLEOTIDE SEQUENCE [LARGE SCALE GENOMIC DNA]</scope>
    <source>
        <strain>M12</strain>
    </source>
</reference>
<feature type="chain" id="PRO_1000131089" description="Putative pre-16S rRNA nuclease">
    <location>
        <begin position="1"/>
        <end position="155"/>
    </location>
</feature>
<evidence type="ECO:0000255" key="1">
    <source>
        <dbReference type="HAMAP-Rule" id="MF_00651"/>
    </source>
</evidence>
<protein>
    <recommendedName>
        <fullName evidence="1">Putative pre-16S rRNA nuclease</fullName>
        <ecNumber evidence="1">3.1.-.-</ecNumber>
    </recommendedName>
</protein>
<gene>
    <name type="ordered locus">Xfasm12_1427</name>
</gene>
<name>YQGF_XYLFM</name>